<keyword id="KW-1185">Reference proteome</keyword>
<protein>
    <recommendedName>
        <fullName>Non-structural protein 3</fullName>
        <shortName>NS3</shortName>
    </recommendedName>
</protein>
<organism>
    <name type="scientific">Lymantria dispar cypovirus 1 (isolate Rao)</name>
    <name type="common">LdCPV-1</name>
    <dbReference type="NCBI Taxonomy" id="648169"/>
    <lineage>
        <taxon>Viruses</taxon>
        <taxon>Riboviria</taxon>
        <taxon>Orthornavirae</taxon>
        <taxon>Duplornaviricota</taxon>
        <taxon>Resentoviricetes</taxon>
        <taxon>Reovirales</taxon>
        <taxon>Spinareoviridae</taxon>
        <taxon>Cypovirus</taxon>
        <taxon>Cypovirus 1</taxon>
    </lineage>
</organism>
<feature type="chain" id="PRO_0000403210" description="Non-structural protein 3">
    <location>
        <begin position="1"/>
        <end position="390"/>
    </location>
</feature>
<feature type="region of interest" description="Disordered" evidence="1">
    <location>
        <begin position="229"/>
        <end position="253"/>
    </location>
</feature>
<evidence type="ECO:0000256" key="1">
    <source>
        <dbReference type="SAM" id="MobiDB-lite"/>
    </source>
</evidence>
<organismHost>
    <name type="scientific">Lymantria dispar</name>
    <name type="common">Gypsy moth</name>
    <name type="synonym">Porthetria dispar</name>
    <dbReference type="NCBI Taxonomy" id="13123"/>
</organismHost>
<dbReference type="EMBL" id="AF389469">
    <property type="protein sequence ID" value="AAK73527.1"/>
    <property type="molecule type" value="Genomic_RNA"/>
</dbReference>
<dbReference type="RefSeq" id="NP_149153.1">
    <property type="nucleotide sequence ID" value="NC_003023.1"/>
</dbReference>
<dbReference type="KEGG" id="vg:2598195"/>
<dbReference type="Proteomes" id="UP000006712">
    <property type="component" value="Genome"/>
</dbReference>
<dbReference type="InterPro" id="IPR055078">
    <property type="entry name" value="Cypovirus_WIV"/>
</dbReference>
<dbReference type="Pfam" id="PF23018">
    <property type="entry name" value="Cypovirus_WIV_4"/>
    <property type="match status" value="1"/>
</dbReference>
<proteinExistence type="predicted"/>
<gene>
    <name type="primary">S7</name>
</gene>
<accession>Q91ID4</accession>
<sequence length="390" mass="43886">MTTKLFKQTIIPTNKDVDEKYIYFIERADHKTIKPLHPSFESWQFAGNQHAHQLEQGYSEGHRFITNYNATSRLNSAMTLQIMNKPMITIVKKFTTNTPHQVTTIPEGYSFGVVKEKLCTNEQLLSLLSLTAEPTAESDEEVNDVSRDDEAEKKDVEARMDWSEDIIELPKQQQESVLVVSKPNMIAEEELMPADIEVVAPRVLEPPTLSPAPIVVAVSSESPQVKEIERPLTNAPKEQRTSRKSVTRTTKPSFSSLSSPDIVSASVITPVSKAAARPVEEFLSSVFVSLFEAWFVRMLPLIKLGKPVYIMPGTIKWDKEVQITDTKIRYYNSVSGRLILAEMESITRALQPGELEDRKELVRRTLETVCAGNNIYVLTGNDTFGVLEAE</sequence>
<name>NS3_LDCPR</name>
<reference key="1">
    <citation type="submission" date="2001-06" db="EMBL/GenBank/DDBJ databases">
        <title>Identification of dsRNA electrophoretypes of two cypoviruses from a dual infection in gypsy moth, Lymantria dispar.</title>
        <authorList>
            <person name="Rao S."/>
            <person name="Shapiro M."/>
            <person name="Lynn D."/>
            <person name="Hagiwara K."/>
            <person name="Blackmon B."/>
            <person name="Fang G."/>
            <person name="Carner G.R."/>
        </authorList>
    </citation>
    <scope>NUCLEOTIDE SEQUENCE [GENOMIC RNA]</scope>
</reference>